<gene>
    <name evidence="1" type="primary">argH</name>
    <name type="ordered locus">Mpal_1078</name>
</gene>
<comment type="catalytic activity">
    <reaction evidence="1">
        <text>2-(N(omega)-L-arginino)succinate = fumarate + L-arginine</text>
        <dbReference type="Rhea" id="RHEA:24020"/>
        <dbReference type="ChEBI" id="CHEBI:29806"/>
        <dbReference type="ChEBI" id="CHEBI:32682"/>
        <dbReference type="ChEBI" id="CHEBI:57472"/>
        <dbReference type="EC" id="4.3.2.1"/>
    </reaction>
</comment>
<comment type="pathway">
    <text evidence="1">Amino-acid biosynthesis; L-arginine biosynthesis; L-arginine from L-ornithine and carbamoyl phosphate: step 3/3.</text>
</comment>
<comment type="subcellular location">
    <subcellularLocation>
        <location evidence="1">Cytoplasm</location>
    </subcellularLocation>
</comment>
<comment type="similarity">
    <text evidence="1">Belongs to the lyase 1 family. Argininosuccinate lyase subfamily.</text>
</comment>
<reference key="1">
    <citation type="journal article" date="2015" name="Genome Announc.">
        <title>Complete Genome Sequence of Methanosphaerula palustris E1-9CT, a Hydrogenotrophic Methanogen Isolated from a Minerotrophic Fen Peatland.</title>
        <authorList>
            <person name="Cadillo-Quiroz H."/>
            <person name="Browne P."/>
            <person name="Kyrpides N."/>
            <person name="Woyke T."/>
            <person name="Goodwin L."/>
            <person name="Detter C."/>
            <person name="Yavitt J.B."/>
            <person name="Zinder S.H."/>
        </authorList>
    </citation>
    <scope>NUCLEOTIDE SEQUENCE [LARGE SCALE GENOMIC DNA]</scope>
    <source>
        <strain>ATCC BAA-1556 / DSM 19958 / E1-9c</strain>
    </source>
</reference>
<sequence>MIHDVVREGRLSGVRSGEVAAFLSSRNADHWIAEADVLVDIAHLLMLYRQGIIEPEPAAAVMDVLLRFSADGVPEEAFDEQFEDIHAGIESLLIAEVGIEQGGRLHIGRSRNDEVATCLRLRLCEELLVIGDAVNGLCEVLVSLAGEHTHSVMPGFTHLQHAQPTTLAHHLLSYAQAFSRDLERLLSTYQRVNRSPLGAAAFASTGYPIDREFTATMLGFSGVLENSMDAVSTRDFALEALADCAILMVNASRCCEELILWSSSLVRFVQLDDAYCSTSSIMPQKKNPDTLEIMRARAGSVIGASTAALSIVKALPMSYNRDLQQLTPHLWEGIGDAGASIRILAGALSTATFNTERMETEAGRGFSTATELADMMVRECGLPFRTAHHIVGRAVRSGSLTLVSLKKAATGESIDLTALGLTEEKVQAALDPVHGIEARSVLGGPAVASVSTAIETLQESVKAGRTAIAEERYRRTTAITTLIKEARRLKTFHQ</sequence>
<evidence type="ECO:0000255" key="1">
    <source>
        <dbReference type="HAMAP-Rule" id="MF_00006"/>
    </source>
</evidence>
<name>ARLY_METPE</name>
<keyword id="KW-0028">Amino-acid biosynthesis</keyword>
<keyword id="KW-0055">Arginine biosynthesis</keyword>
<keyword id="KW-0963">Cytoplasm</keyword>
<keyword id="KW-0456">Lyase</keyword>
<keyword id="KW-1185">Reference proteome</keyword>
<organism>
    <name type="scientific">Methanosphaerula palustris (strain ATCC BAA-1556 / DSM 19958 / E1-9c)</name>
    <dbReference type="NCBI Taxonomy" id="521011"/>
    <lineage>
        <taxon>Archaea</taxon>
        <taxon>Methanobacteriati</taxon>
        <taxon>Methanobacteriota</taxon>
        <taxon>Stenosarchaea group</taxon>
        <taxon>Methanomicrobia</taxon>
        <taxon>Methanomicrobiales</taxon>
        <taxon>Methanoregulaceae</taxon>
        <taxon>Methanosphaerula</taxon>
    </lineage>
</organism>
<proteinExistence type="inferred from homology"/>
<accession>B8GH19</accession>
<protein>
    <recommendedName>
        <fullName evidence="1">Argininosuccinate lyase</fullName>
        <shortName evidence="1">ASAL</shortName>
        <ecNumber evidence="1">4.3.2.1</ecNumber>
    </recommendedName>
    <alternativeName>
        <fullName evidence="1">Arginosuccinase</fullName>
    </alternativeName>
</protein>
<feature type="chain" id="PRO_1000116333" description="Argininosuccinate lyase">
    <location>
        <begin position="1"/>
        <end position="494"/>
    </location>
</feature>
<dbReference type="EC" id="4.3.2.1" evidence="1"/>
<dbReference type="EMBL" id="CP001338">
    <property type="protein sequence ID" value="ACL16424.1"/>
    <property type="molecule type" value="Genomic_DNA"/>
</dbReference>
<dbReference type="RefSeq" id="WP_012617743.1">
    <property type="nucleotide sequence ID" value="NC_011832.1"/>
</dbReference>
<dbReference type="SMR" id="B8GH19"/>
<dbReference type="STRING" id="521011.Mpal_1078"/>
<dbReference type="GeneID" id="7270994"/>
<dbReference type="KEGG" id="mpl:Mpal_1078"/>
<dbReference type="eggNOG" id="arCOG01748">
    <property type="taxonomic scope" value="Archaea"/>
</dbReference>
<dbReference type="HOGENOM" id="CLU_027272_2_3_2"/>
<dbReference type="OrthoDB" id="27337at2157"/>
<dbReference type="UniPathway" id="UPA00068">
    <property type="reaction ID" value="UER00114"/>
</dbReference>
<dbReference type="Proteomes" id="UP000002457">
    <property type="component" value="Chromosome"/>
</dbReference>
<dbReference type="GO" id="GO:0005829">
    <property type="term" value="C:cytosol"/>
    <property type="evidence" value="ECO:0007669"/>
    <property type="project" value="TreeGrafter"/>
</dbReference>
<dbReference type="GO" id="GO:0004056">
    <property type="term" value="F:argininosuccinate lyase activity"/>
    <property type="evidence" value="ECO:0007669"/>
    <property type="project" value="UniProtKB-UniRule"/>
</dbReference>
<dbReference type="GO" id="GO:0042450">
    <property type="term" value="P:arginine biosynthetic process via ornithine"/>
    <property type="evidence" value="ECO:0007669"/>
    <property type="project" value="InterPro"/>
</dbReference>
<dbReference type="GO" id="GO:0006526">
    <property type="term" value="P:L-arginine biosynthetic process"/>
    <property type="evidence" value="ECO:0007669"/>
    <property type="project" value="UniProtKB-UniRule"/>
</dbReference>
<dbReference type="CDD" id="cd01359">
    <property type="entry name" value="Argininosuccinate_lyase"/>
    <property type="match status" value="1"/>
</dbReference>
<dbReference type="FunFam" id="1.20.200.10:FF:000015">
    <property type="entry name" value="argininosuccinate lyase isoform X2"/>
    <property type="match status" value="1"/>
</dbReference>
<dbReference type="Gene3D" id="1.10.40.30">
    <property type="entry name" value="Fumarase/aspartase (C-terminal domain)"/>
    <property type="match status" value="1"/>
</dbReference>
<dbReference type="Gene3D" id="1.20.200.10">
    <property type="entry name" value="Fumarase/aspartase (Central domain)"/>
    <property type="match status" value="1"/>
</dbReference>
<dbReference type="Gene3D" id="1.10.275.10">
    <property type="entry name" value="Fumarase/aspartase (N-terminal domain)"/>
    <property type="match status" value="1"/>
</dbReference>
<dbReference type="HAMAP" id="MF_00006">
    <property type="entry name" value="Arg_succ_lyase"/>
    <property type="match status" value="1"/>
</dbReference>
<dbReference type="InterPro" id="IPR029419">
    <property type="entry name" value="Arg_succ_lyase_C"/>
</dbReference>
<dbReference type="InterPro" id="IPR009049">
    <property type="entry name" value="Argininosuccinate_lyase"/>
</dbReference>
<dbReference type="InterPro" id="IPR024083">
    <property type="entry name" value="Fumarase/histidase_N"/>
</dbReference>
<dbReference type="InterPro" id="IPR000362">
    <property type="entry name" value="Fumarate_lyase_fam"/>
</dbReference>
<dbReference type="InterPro" id="IPR022761">
    <property type="entry name" value="Fumarate_lyase_N"/>
</dbReference>
<dbReference type="InterPro" id="IPR008948">
    <property type="entry name" value="L-Aspartase-like"/>
</dbReference>
<dbReference type="NCBIfam" id="TIGR00838">
    <property type="entry name" value="argH"/>
    <property type="match status" value="1"/>
</dbReference>
<dbReference type="PANTHER" id="PTHR43814">
    <property type="entry name" value="ARGININOSUCCINATE LYASE"/>
    <property type="match status" value="1"/>
</dbReference>
<dbReference type="PANTHER" id="PTHR43814:SF1">
    <property type="entry name" value="ARGININOSUCCINATE LYASE"/>
    <property type="match status" value="1"/>
</dbReference>
<dbReference type="Pfam" id="PF14698">
    <property type="entry name" value="ASL_C2"/>
    <property type="match status" value="1"/>
</dbReference>
<dbReference type="Pfam" id="PF00206">
    <property type="entry name" value="Lyase_1"/>
    <property type="match status" value="1"/>
</dbReference>
<dbReference type="PRINTS" id="PR00145">
    <property type="entry name" value="ARGSUCLYASE"/>
</dbReference>
<dbReference type="PRINTS" id="PR00149">
    <property type="entry name" value="FUMRATELYASE"/>
</dbReference>
<dbReference type="SUPFAM" id="SSF48557">
    <property type="entry name" value="L-aspartase-like"/>
    <property type="match status" value="1"/>
</dbReference>